<reference key="1">
    <citation type="journal article" date="2010" name="Genome Biol. Evol.">
        <title>Continuing evolution of Burkholderia mallei through genome reduction and large-scale rearrangements.</title>
        <authorList>
            <person name="Losada L."/>
            <person name="Ronning C.M."/>
            <person name="DeShazer D."/>
            <person name="Woods D."/>
            <person name="Fedorova N."/>
            <person name="Kim H.S."/>
            <person name="Shabalina S.A."/>
            <person name="Pearson T.R."/>
            <person name="Brinkac L."/>
            <person name="Tan P."/>
            <person name="Nandi T."/>
            <person name="Crabtree J."/>
            <person name="Badger J."/>
            <person name="Beckstrom-Sternberg S."/>
            <person name="Saqib M."/>
            <person name="Schutzer S.E."/>
            <person name="Keim P."/>
            <person name="Nierman W.C."/>
        </authorList>
    </citation>
    <scope>NUCLEOTIDE SEQUENCE [LARGE SCALE GENOMIC DNA]</scope>
    <source>
        <strain>1106a</strain>
    </source>
</reference>
<name>GLGB_BURP0</name>
<evidence type="ECO:0000255" key="1">
    <source>
        <dbReference type="HAMAP-Rule" id="MF_00685"/>
    </source>
</evidence>
<comment type="function">
    <text evidence="1">Catalyzes the formation of the alpha-1,6-glucosidic linkages in glycogen by scission of a 1,4-alpha-linked oligosaccharide from growing alpha-1,4-glucan chains and the subsequent attachment of the oligosaccharide to the alpha-1,6 position.</text>
</comment>
<comment type="catalytic activity">
    <reaction evidence="1">
        <text>Transfers a segment of a (1-&gt;4)-alpha-D-glucan chain to a primary hydroxy group in a similar glucan chain.</text>
        <dbReference type="EC" id="2.4.1.18"/>
    </reaction>
</comment>
<comment type="pathway">
    <text evidence="1">Glycan biosynthesis; glycogen biosynthesis.</text>
</comment>
<comment type="subunit">
    <text evidence="1">Monomer.</text>
</comment>
<comment type="similarity">
    <text evidence="1">Belongs to the glycosyl hydrolase 13 family. GlgB subfamily.</text>
</comment>
<sequence length="738" mass="81116">MTDAPFDRADIDALLDARHPDPFACLGPHRVGDATVVRTLLPGALRVRAIAAGGGVLGELRQVDPAGCFAGALPDGRERGERPRYRLSIDWPDARQDVEDAYAFGTLLDEDALARFAAGDPRAALACLGARALDMDGVPGVRFAVWAPGASRVSVVGDFNGWDARRHPMRLRRPWGVWELFVPRIGAGERYKFALRARDGAALPLKADPCACRTEAPPRTASIVADLDALERFGWHDDAWLRARASLDLAHAPVSIYEVHPESWLRVAAEGNRSATWDELAQRLIPYAAGMGFSHVELTPIAEYPFGGSWGYQSLSPFAPSARFGPPEGFARFVEHAHAAGLGVIVDWVPAHFPDDPHGLGKFDGTALFEHADPREGWHPDWHTHVFNVGRREVGAFLIASALAWAHRYHVDGIRVDAVASMLYRDYSRAAGEWVPNVYGGRENLESIAFLKHFNDTLHGPAAPPGVATFAEESTAWPGVTAPTAEHGLGFDFKWNMGWMHDTLAYLREDPIHRRHHHDRLTFGLVYAFSERFVLPLSHDEVVHGKGSLAAKMPGDAWQRLANLRAYFGFMWAHPGKKLLFMGGEFAQWGEFAHDATPQWDLLDAPAHRGVQRLVRDLNRLHAAEPALHALDDRPAGFAWLVGDDRNNSVFAFVRRDDAGRMLVAVCNFTPVPRTDYRLGLPAPGRWAEVLNTDGAAYGGTDAGNGGALQADEIPAHGERWSAALRLPPLATLWLRPA</sequence>
<proteinExistence type="inferred from homology"/>
<keyword id="KW-0119">Carbohydrate metabolism</keyword>
<keyword id="KW-0320">Glycogen biosynthesis</keyword>
<keyword id="KW-0321">Glycogen metabolism</keyword>
<keyword id="KW-0328">Glycosyltransferase</keyword>
<keyword id="KW-0808">Transferase</keyword>
<protein>
    <recommendedName>
        <fullName evidence="1">1,4-alpha-glucan branching enzyme GlgB</fullName>
        <ecNumber evidence="1">2.4.1.18</ecNumber>
    </recommendedName>
    <alternativeName>
        <fullName evidence="1">1,4-alpha-D-glucan:1,4-alpha-D-glucan 6-glucosyl-transferase</fullName>
    </alternativeName>
    <alternativeName>
        <fullName evidence="1">Alpha-(1-&gt;4)-glucan branching enzyme</fullName>
    </alternativeName>
    <alternativeName>
        <fullName evidence="1">Glycogen branching enzyme</fullName>
        <shortName evidence="1">BE</shortName>
    </alternativeName>
</protein>
<feature type="chain" id="PRO_1000044971" description="1,4-alpha-glucan branching enzyme GlgB">
    <location>
        <begin position="1"/>
        <end position="738"/>
    </location>
</feature>
<feature type="active site" description="Nucleophile" evidence="1">
    <location>
        <position position="417"/>
    </location>
</feature>
<feature type="active site" description="Proton donor" evidence="1">
    <location>
        <position position="472"/>
    </location>
</feature>
<gene>
    <name evidence="1" type="primary">glgB</name>
    <name type="ordered locus">BURPS1106A_1566</name>
</gene>
<organism>
    <name type="scientific">Burkholderia pseudomallei (strain 1106a)</name>
    <dbReference type="NCBI Taxonomy" id="357348"/>
    <lineage>
        <taxon>Bacteria</taxon>
        <taxon>Pseudomonadati</taxon>
        <taxon>Pseudomonadota</taxon>
        <taxon>Betaproteobacteria</taxon>
        <taxon>Burkholderiales</taxon>
        <taxon>Burkholderiaceae</taxon>
        <taxon>Burkholderia</taxon>
        <taxon>pseudomallei group</taxon>
    </lineage>
</organism>
<accession>A3NU16</accession>
<dbReference type="EC" id="2.4.1.18" evidence="1"/>
<dbReference type="EMBL" id="CP000572">
    <property type="protein sequence ID" value="ABN91974.1"/>
    <property type="molecule type" value="Genomic_DNA"/>
</dbReference>
<dbReference type="RefSeq" id="WP_004526721.1">
    <property type="nucleotide sequence ID" value="NC_009076.1"/>
</dbReference>
<dbReference type="SMR" id="A3NU16"/>
<dbReference type="CAZy" id="CBM48">
    <property type="family name" value="Carbohydrate-Binding Module Family 48"/>
</dbReference>
<dbReference type="CAZy" id="GH13">
    <property type="family name" value="Glycoside Hydrolase Family 13"/>
</dbReference>
<dbReference type="KEGG" id="bpl:BURPS1106A_1566"/>
<dbReference type="HOGENOM" id="CLU_004245_3_2_4"/>
<dbReference type="UniPathway" id="UPA00164"/>
<dbReference type="Proteomes" id="UP000006738">
    <property type="component" value="Chromosome I"/>
</dbReference>
<dbReference type="GO" id="GO:0005829">
    <property type="term" value="C:cytosol"/>
    <property type="evidence" value="ECO:0007669"/>
    <property type="project" value="TreeGrafter"/>
</dbReference>
<dbReference type="GO" id="GO:0003844">
    <property type="term" value="F:1,4-alpha-glucan branching enzyme activity"/>
    <property type="evidence" value="ECO:0007669"/>
    <property type="project" value="UniProtKB-UniRule"/>
</dbReference>
<dbReference type="GO" id="GO:0043169">
    <property type="term" value="F:cation binding"/>
    <property type="evidence" value="ECO:0007669"/>
    <property type="project" value="InterPro"/>
</dbReference>
<dbReference type="GO" id="GO:0004553">
    <property type="term" value="F:hydrolase activity, hydrolyzing O-glycosyl compounds"/>
    <property type="evidence" value="ECO:0007669"/>
    <property type="project" value="InterPro"/>
</dbReference>
<dbReference type="GO" id="GO:0005978">
    <property type="term" value="P:glycogen biosynthetic process"/>
    <property type="evidence" value="ECO:0007669"/>
    <property type="project" value="UniProtKB-UniRule"/>
</dbReference>
<dbReference type="CDD" id="cd11322">
    <property type="entry name" value="AmyAc_Glg_BE"/>
    <property type="match status" value="1"/>
</dbReference>
<dbReference type="CDD" id="cd02855">
    <property type="entry name" value="E_set_GBE_prok_N"/>
    <property type="match status" value="1"/>
</dbReference>
<dbReference type="FunFam" id="2.60.40.1180:FF:000002">
    <property type="entry name" value="1,4-alpha-glucan branching enzyme GlgB"/>
    <property type="match status" value="1"/>
</dbReference>
<dbReference type="FunFam" id="3.20.20.80:FF:000003">
    <property type="entry name" value="1,4-alpha-glucan branching enzyme GlgB"/>
    <property type="match status" value="1"/>
</dbReference>
<dbReference type="Gene3D" id="3.20.20.80">
    <property type="entry name" value="Glycosidases"/>
    <property type="match status" value="1"/>
</dbReference>
<dbReference type="Gene3D" id="2.60.40.1180">
    <property type="entry name" value="Golgi alpha-mannosidase II"/>
    <property type="match status" value="1"/>
</dbReference>
<dbReference type="Gene3D" id="2.60.40.10">
    <property type="entry name" value="Immunoglobulins"/>
    <property type="match status" value="1"/>
</dbReference>
<dbReference type="HAMAP" id="MF_00685">
    <property type="entry name" value="GlgB"/>
    <property type="match status" value="1"/>
</dbReference>
<dbReference type="InterPro" id="IPR006048">
    <property type="entry name" value="A-amylase/branching_C"/>
</dbReference>
<dbReference type="InterPro" id="IPR037439">
    <property type="entry name" value="Branching_enzy"/>
</dbReference>
<dbReference type="InterPro" id="IPR006407">
    <property type="entry name" value="GlgB"/>
</dbReference>
<dbReference type="InterPro" id="IPR054169">
    <property type="entry name" value="GlgB_N"/>
</dbReference>
<dbReference type="InterPro" id="IPR044143">
    <property type="entry name" value="GlgB_N_E_set_prok"/>
</dbReference>
<dbReference type="InterPro" id="IPR006047">
    <property type="entry name" value="Glyco_hydro_13_cat_dom"/>
</dbReference>
<dbReference type="InterPro" id="IPR004193">
    <property type="entry name" value="Glyco_hydro_13_N"/>
</dbReference>
<dbReference type="InterPro" id="IPR013780">
    <property type="entry name" value="Glyco_hydro_b"/>
</dbReference>
<dbReference type="InterPro" id="IPR017853">
    <property type="entry name" value="Glycoside_hydrolase_SF"/>
</dbReference>
<dbReference type="InterPro" id="IPR013783">
    <property type="entry name" value="Ig-like_fold"/>
</dbReference>
<dbReference type="InterPro" id="IPR014756">
    <property type="entry name" value="Ig_E-set"/>
</dbReference>
<dbReference type="NCBIfam" id="TIGR01515">
    <property type="entry name" value="branching_enzym"/>
    <property type="match status" value="1"/>
</dbReference>
<dbReference type="NCBIfam" id="NF003811">
    <property type="entry name" value="PRK05402.1"/>
    <property type="match status" value="1"/>
</dbReference>
<dbReference type="NCBIfam" id="NF008967">
    <property type="entry name" value="PRK12313.1"/>
    <property type="match status" value="1"/>
</dbReference>
<dbReference type="PANTHER" id="PTHR43651">
    <property type="entry name" value="1,4-ALPHA-GLUCAN-BRANCHING ENZYME"/>
    <property type="match status" value="1"/>
</dbReference>
<dbReference type="PANTHER" id="PTHR43651:SF3">
    <property type="entry name" value="1,4-ALPHA-GLUCAN-BRANCHING ENZYME"/>
    <property type="match status" value="1"/>
</dbReference>
<dbReference type="Pfam" id="PF02806">
    <property type="entry name" value="Alpha-amylase_C"/>
    <property type="match status" value="1"/>
</dbReference>
<dbReference type="Pfam" id="PF02922">
    <property type="entry name" value="CBM_48"/>
    <property type="match status" value="1"/>
</dbReference>
<dbReference type="Pfam" id="PF22019">
    <property type="entry name" value="GlgB_N"/>
    <property type="match status" value="1"/>
</dbReference>
<dbReference type="PIRSF" id="PIRSF000463">
    <property type="entry name" value="GlgB"/>
    <property type="match status" value="1"/>
</dbReference>
<dbReference type="SMART" id="SM00642">
    <property type="entry name" value="Aamy"/>
    <property type="match status" value="1"/>
</dbReference>
<dbReference type="SUPFAM" id="SSF51445">
    <property type="entry name" value="(Trans)glycosidases"/>
    <property type="match status" value="1"/>
</dbReference>
<dbReference type="SUPFAM" id="SSF81296">
    <property type="entry name" value="E set domains"/>
    <property type="match status" value="1"/>
</dbReference>
<dbReference type="SUPFAM" id="SSF51011">
    <property type="entry name" value="Glycosyl hydrolase domain"/>
    <property type="match status" value="1"/>
</dbReference>